<dbReference type="EC" id="6.1.1.7" evidence="1"/>
<dbReference type="EMBL" id="CP000382">
    <property type="protein sequence ID" value="ABK62120.1"/>
    <property type="molecule type" value="Genomic_DNA"/>
</dbReference>
<dbReference type="RefSeq" id="WP_011722349.1">
    <property type="nucleotide sequence ID" value="NC_008593.1"/>
</dbReference>
<dbReference type="SMR" id="A0Q151"/>
<dbReference type="STRING" id="386415.NT01CX_2280"/>
<dbReference type="KEGG" id="cno:NT01CX_2280"/>
<dbReference type="eggNOG" id="COG0013">
    <property type="taxonomic scope" value="Bacteria"/>
</dbReference>
<dbReference type="HOGENOM" id="CLU_004485_1_1_9"/>
<dbReference type="Proteomes" id="UP000008220">
    <property type="component" value="Chromosome"/>
</dbReference>
<dbReference type="GO" id="GO:0005829">
    <property type="term" value="C:cytosol"/>
    <property type="evidence" value="ECO:0007669"/>
    <property type="project" value="TreeGrafter"/>
</dbReference>
<dbReference type="GO" id="GO:0004813">
    <property type="term" value="F:alanine-tRNA ligase activity"/>
    <property type="evidence" value="ECO:0007669"/>
    <property type="project" value="UniProtKB-UniRule"/>
</dbReference>
<dbReference type="GO" id="GO:0002161">
    <property type="term" value="F:aminoacyl-tRNA deacylase activity"/>
    <property type="evidence" value="ECO:0007669"/>
    <property type="project" value="TreeGrafter"/>
</dbReference>
<dbReference type="GO" id="GO:0005524">
    <property type="term" value="F:ATP binding"/>
    <property type="evidence" value="ECO:0007669"/>
    <property type="project" value="UniProtKB-UniRule"/>
</dbReference>
<dbReference type="GO" id="GO:0140096">
    <property type="term" value="F:catalytic activity, acting on a protein"/>
    <property type="evidence" value="ECO:0007669"/>
    <property type="project" value="UniProtKB-ARBA"/>
</dbReference>
<dbReference type="GO" id="GO:0016740">
    <property type="term" value="F:transferase activity"/>
    <property type="evidence" value="ECO:0007669"/>
    <property type="project" value="UniProtKB-ARBA"/>
</dbReference>
<dbReference type="GO" id="GO:0000049">
    <property type="term" value="F:tRNA binding"/>
    <property type="evidence" value="ECO:0007669"/>
    <property type="project" value="UniProtKB-KW"/>
</dbReference>
<dbReference type="GO" id="GO:0008270">
    <property type="term" value="F:zinc ion binding"/>
    <property type="evidence" value="ECO:0007669"/>
    <property type="project" value="UniProtKB-UniRule"/>
</dbReference>
<dbReference type="GO" id="GO:0006419">
    <property type="term" value="P:alanyl-tRNA aminoacylation"/>
    <property type="evidence" value="ECO:0007669"/>
    <property type="project" value="UniProtKB-UniRule"/>
</dbReference>
<dbReference type="CDD" id="cd00673">
    <property type="entry name" value="AlaRS_core"/>
    <property type="match status" value="1"/>
</dbReference>
<dbReference type="FunFam" id="2.40.30.130:FF:000001">
    <property type="entry name" value="Alanine--tRNA ligase"/>
    <property type="match status" value="1"/>
</dbReference>
<dbReference type="FunFam" id="3.10.310.40:FF:000001">
    <property type="entry name" value="Alanine--tRNA ligase"/>
    <property type="match status" value="1"/>
</dbReference>
<dbReference type="FunFam" id="3.30.54.20:FF:000001">
    <property type="entry name" value="Alanine--tRNA ligase"/>
    <property type="match status" value="1"/>
</dbReference>
<dbReference type="FunFam" id="3.30.930.10:FF:000004">
    <property type="entry name" value="Alanine--tRNA ligase"/>
    <property type="match status" value="1"/>
</dbReference>
<dbReference type="FunFam" id="3.30.980.10:FF:000004">
    <property type="entry name" value="Alanine--tRNA ligase, cytoplasmic"/>
    <property type="match status" value="1"/>
</dbReference>
<dbReference type="Gene3D" id="2.40.30.130">
    <property type="match status" value="1"/>
</dbReference>
<dbReference type="Gene3D" id="3.10.310.40">
    <property type="match status" value="1"/>
</dbReference>
<dbReference type="Gene3D" id="3.30.54.20">
    <property type="match status" value="1"/>
</dbReference>
<dbReference type="Gene3D" id="6.10.250.550">
    <property type="match status" value="1"/>
</dbReference>
<dbReference type="Gene3D" id="3.30.930.10">
    <property type="entry name" value="Bira Bifunctional Protein, Domain 2"/>
    <property type="match status" value="1"/>
</dbReference>
<dbReference type="Gene3D" id="3.30.980.10">
    <property type="entry name" value="Threonyl-trna Synthetase, Chain A, domain 2"/>
    <property type="match status" value="1"/>
</dbReference>
<dbReference type="HAMAP" id="MF_00036_B">
    <property type="entry name" value="Ala_tRNA_synth_B"/>
    <property type="match status" value="1"/>
</dbReference>
<dbReference type="InterPro" id="IPR045864">
    <property type="entry name" value="aa-tRNA-synth_II/BPL/LPL"/>
</dbReference>
<dbReference type="InterPro" id="IPR002318">
    <property type="entry name" value="Ala-tRNA-lgiase_IIc"/>
</dbReference>
<dbReference type="InterPro" id="IPR018162">
    <property type="entry name" value="Ala-tRNA-ligase_IIc_anticod-bd"/>
</dbReference>
<dbReference type="InterPro" id="IPR018165">
    <property type="entry name" value="Ala-tRNA-synth_IIc_core"/>
</dbReference>
<dbReference type="InterPro" id="IPR018164">
    <property type="entry name" value="Ala-tRNA-synth_IIc_N"/>
</dbReference>
<dbReference type="InterPro" id="IPR050058">
    <property type="entry name" value="Ala-tRNA_ligase"/>
</dbReference>
<dbReference type="InterPro" id="IPR023033">
    <property type="entry name" value="Ala_tRNA_ligase_euk/bac"/>
</dbReference>
<dbReference type="InterPro" id="IPR003156">
    <property type="entry name" value="DHHA1_dom"/>
</dbReference>
<dbReference type="InterPro" id="IPR018163">
    <property type="entry name" value="Thr/Ala-tRNA-synth_IIc_edit"/>
</dbReference>
<dbReference type="InterPro" id="IPR009000">
    <property type="entry name" value="Transl_B-barrel_sf"/>
</dbReference>
<dbReference type="InterPro" id="IPR012947">
    <property type="entry name" value="tRNA_SAD"/>
</dbReference>
<dbReference type="NCBIfam" id="TIGR00344">
    <property type="entry name" value="alaS"/>
    <property type="match status" value="1"/>
</dbReference>
<dbReference type="PANTHER" id="PTHR11777:SF9">
    <property type="entry name" value="ALANINE--TRNA LIGASE, CYTOPLASMIC"/>
    <property type="match status" value="1"/>
</dbReference>
<dbReference type="PANTHER" id="PTHR11777">
    <property type="entry name" value="ALANYL-TRNA SYNTHETASE"/>
    <property type="match status" value="1"/>
</dbReference>
<dbReference type="Pfam" id="PF02272">
    <property type="entry name" value="DHHA1"/>
    <property type="match status" value="1"/>
</dbReference>
<dbReference type="Pfam" id="PF01411">
    <property type="entry name" value="tRNA-synt_2c"/>
    <property type="match status" value="1"/>
</dbReference>
<dbReference type="Pfam" id="PF07973">
    <property type="entry name" value="tRNA_SAD"/>
    <property type="match status" value="1"/>
</dbReference>
<dbReference type="PRINTS" id="PR00980">
    <property type="entry name" value="TRNASYNTHALA"/>
</dbReference>
<dbReference type="SMART" id="SM00863">
    <property type="entry name" value="tRNA_SAD"/>
    <property type="match status" value="1"/>
</dbReference>
<dbReference type="SUPFAM" id="SSF55681">
    <property type="entry name" value="Class II aaRS and biotin synthetases"/>
    <property type="match status" value="1"/>
</dbReference>
<dbReference type="SUPFAM" id="SSF101353">
    <property type="entry name" value="Putative anticodon-binding domain of alanyl-tRNA synthetase (AlaRS)"/>
    <property type="match status" value="1"/>
</dbReference>
<dbReference type="SUPFAM" id="SSF55186">
    <property type="entry name" value="ThrRS/AlaRS common domain"/>
    <property type="match status" value="1"/>
</dbReference>
<dbReference type="SUPFAM" id="SSF50447">
    <property type="entry name" value="Translation proteins"/>
    <property type="match status" value="1"/>
</dbReference>
<dbReference type="PROSITE" id="PS50860">
    <property type="entry name" value="AA_TRNA_LIGASE_II_ALA"/>
    <property type="match status" value="1"/>
</dbReference>
<feature type="chain" id="PRO_0000347568" description="Alanine--tRNA ligase">
    <location>
        <begin position="1"/>
        <end position="879"/>
    </location>
</feature>
<feature type="binding site" evidence="1">
    <location>
        <position position="566"/>
    </location>
    <ligand>
        <name>Zn(2+)</name>
        <dbReference type="ChEBI" id="CHEBI:29105"/>
    </ligand>
</feature>
<feature type="binding site" evidence="1">
    <location>
        <position position="570"/>
    </location>
    <ligand>
        <name>Zn(2+)</name>
        <dbReference type="ChEBI" id="CHEBI:29105"/>
    </ligand>
</feature>
<feature type="binding site" evidence="1">
    <location>
        <position position="668"/>
    </location>
    <ligand>
        <name>Zn(2+)</name>
        <dbReference type="ChEBI" id="CHEBI:29105"/>
    </ligand>
</feature>
<feature type="binding site" evidence="1">
    <location>
        <position position="672"/>
    </location>
    <ligand>
        <name>Zn(2+)</name>
        <dbReference type="ChEBI" id="CHEBI:29105"/>
    </ligand>
</feature>
<protein>
    <recommendedName>
        <fullName evidence="1">Alanine--tRNA ligase</fullName>
        <ecNumber evidence="1">6.1.1.7</ecNumber>
    </recommendedName>
    <alternativeName>
        <fullName evidence="1">Alanyl-tRNA synthetase</fullName>
        <shortName evidence="1">AlaRS</shortName>
    </alternativeName>
</protein>
<gene>
    <name evidence="1" type="primary">alaS</name>
    <name type="ordered locus">NT01CX_2280</name>
</gene>
<accession>A0Q151</accession>
<comment type="function">
    <text evidence="1">Catalyzes the attachment of alanine to tRNA(Ala) in a two-step reaction: alanine is first activated by ATP to form Ala-AMP and then transferred to the acceptor end of tRNA(Ala). Also edits incorrectly charged Ser-tRNA(Ala) and Gly-tRNA(Ala) via its editing domain.</text>
</comment>
<comment type="catalytic activity">
    <reaction evidence="1">
        <text>tRNA(Ala) + L-alanine + ATP = L-alanyl-tRNA(Ala) + AMP + diphosphate</text>
        <dbReference type="Rhea" id="RHEA:12540"/>
        <dbReference type="Rhea" id="RHEA-COMP:9657"/>
        <dbReference type="Rhea" id="RHEA-COMP:9923"/>
        <dbReference type="ChEBI" id="CHEBI:30616"/>
        <dbReference type="ChEBI" id="CHEBI:33019"/>
        <dbReference type="ChEBI" id="CHEBI:57972"/>
        <dbReference type="ChEBI" id="CHEBI:78442"/>
        <dbReference type="ChEBI" id="CHEBI:78497"/>
        <dbReference type="ChEBI" id="CHEBI:456215"/>
        <dbReference type="EC" id="6.1.1.7"/>
    </reaction>
</comment>
<comment type="cofactor">
    <cofactor evidence="1">
        <name>Zn(2+)</name>
        <dbReference type="ChEBI" id="CHEBI:29105"/>
    </cofactor>
    <text evidence="1">Binds 1 zinc ion per subunit.</text>
</comment>
<comment type="subcellular location">
    <subcellularLocation>
        <location evidence="1">Cytoplasm</location>
    </subcellularLocation>
</comment>
<comment type="domain">
    <text evidence="1">Consists of three domains; the N-terminal catalytic domain, the editing domain and the C-terminal C-Ala domain. The editing domain removes incorrectly charged amino acids, while the C-Ala domain, along with tRNA(Ala), serves as a bridge to cooperatively bring together the editing and aminoacylation centers thus stimulating deacylation of misacylated tRNAs.</text>
</comment>
<comment type="similarity">
    <text evidence="1">Belongs to the class-II aminoacyl-tRNA synthetase family.</text>
</comment>
<name>SYA_CLONN</name>
<reference key="1">
    <citation type="journal article" date="2006" name="Nat. Biotechnol.">
        <title>The genome and transcriptomes of the anti-tumor agent Clostridium novyi-NT.</title>
        <authorList>
            <person name="Bettegowda C."/>
            <person name="Huang X."/>
            <person name="Lin J."/>
            <person name="Cheong I."/>
            <person name="Kohli M."/>
            <person name="Szabo S.A."/>
            <person name="Zhang X."/>
            <person name="Diaz L.A. Jr."/>
            <person name="Velculescu V.E."/>
            <person name="Parmigiani G."/>
            <person name="Kinzler K.W."/>
            <person name="Vogelstein B."/>
            <person name="Zhou S."/>
        </authorList>
    </citation>
    <scope>NUCLEOTIDE SEQUENCE [LARGE SCALE GENOMIC DNA]</scope>
    <source>
        <strain>NT</strain>
    </source>
</reference>
<sequence>MEKMGLNQVREAYLKFFESKGHLRLPSFSVVPKNDKSLLLINAGMAPLKPYFTGLQTPPRKRVTTCQKCIRTGDIENVGKTSRHATFFEMMGNFSFGDYFKNEVIPWAWEFTTEVLKLPKEKLYVTIYLDDDEAYDIWTSKTDVDPKHIFRLGKEDNFWEHGVGPCGPCSEIHFYKDNGEIKSAEEFIEKSDADRAVEFWNLVFTQFDKDEDGNYNRLEFPNIDTGMGLERMATIMQGVETIFEVDTIKSILDKVAALANTKYGEDELKDVSLRIITDHVRSVSVMISDEVLPSNEGRGYVLRRLLRRAARHGKLLGIKGTFLYKIVDSVIENSGEAYPELKEKKDYIKKVISIEEERFAETIDSGMEILKEYIEDLEKNNKKVLSGEKVFKLYDTYGFPLELTEEILEEKGITVDMDSFNKEMKEQRERARAARSESTYMGTDVKILDTIPSEIETTFDGYENLELQSKVKVIIKDDAFADCINKGEKGIIVTDRTPFYAEMGGQIGDKGTISADGFMAKVQDCKNNIGGKIVHFVEVTEGSIKLEDEVLLEVDRKRRENIGKNHSATHLLHAALRKVVGEHVHQSGSYVDEDKLRFDFTHFESLTHEELKKVEDLVNDTIESVWDVVTKEMTIEEAKNSGAMALFDEKYGDKVRVVKMGDFSTELCGGTHISNVGKIGLFKIVSESGIAAGTRRIEAVTGHKALEFIEHKSDLLRQIASMLKCSEKDIINRLNQQNAELKDKDKEISALKSKLASGSEDDILKNIKEVKGVKLAVAALKDVDGEALRNLGDKIKNKIESGVVVLGSEVEGKVQFIAMASKDVVSKGVHCGTIVREIAKIAGGGGGGRPDMAQAGGRLPEKLNDAINEVENIMENLVK</sequence>
<evidence type="ECO:0000255" key="1">
    <source>
        <dbReference type="HAMAP-Rule" id="MF_00036"/>
    </source>
</evidence>
<keyword id="KW-0030">Aminoacyl-tRNA synthetase</keyword>
<keyword id="KW-0067">ATP-binding</keyword>
<keyword id="KW-0963">Cytoplasm</keyword>
<keyword id="KW-0436">Ligase</keyword>
<keyword id="KW-0479">Metal-binding</keyword>
<keyword id="KW-0547">Nucleotide-binding</keyword>
<keyword id="KW-0648">Protein biosynthesis</keyword>
<keyword id="KW-1185">Reference proteome</keyword>
<keyword id="KW-0694">RNA-binding</keyword>
<keyword id="KW-0820">tRNA-binding</keyword>
<keyword id="KW-0862">Zinc</keyword>
<proteinExistence type="inferred from homology"/>
<organism>
    <name type="scientific">Clostridium novyi (strain NT)</name>
    <dbReference type="NCBI Taxonomy" id="386415"/>
    <lineage>
        <taxon>Bacteria</taxon>
        <taxon>Bacillati</taxon>
        <taxon>Bacillota</taxon>
        <taxon>Clostridia</taxon>
        <taxon>Eubacteriales</taxon>
        <taxon>Clostridiaceae</taxon>
        <taxon>Clostridium</taxon>
    </lineage>
</organism>